<protein>
    <recommendedName>
        <fullName>UDP-glycosyltransferase 85A5</fullName>
        <ecNumber>2.4.1.-</ecNumber>
    </recommendedName>
</protein>
<keyword id="KW-0025">Alternative splicing</keyword>
<keyword id="KW-0328">Glycosyltransferase</keyword>
<keyword id="KW-1185">Reference proteome</keyword>
<keyword id="KW-0808">Transferase</keyword>
<proteinExistence type="evidence at transcript level"/>
<accession>Q9LMF0</accession>
<accession>Q0WL30</accession>
<accession>Q5UB81</accession>
<accession>Q94BU0</accession>
<organism>
    <name type="scientific">Arabidopsis thaliana</name>
    <name type="common">Mouse-ear cress</name>
    <dbReference type="NCBI Taxonomy" id="3702"/>
    <lineage>
        <taxon>Eukaryota</taxon>
        <taxon>Viridiplantae</taxon>
        <taxon>Streptophyta</taxon>
        <taxon>Embryophyta</taxon>
        <taxon>Tracheophyta</taxon>
        <taxon>Spermatophyta</taxon>
        <taxon>Magnoliopsida</taxon>
        <taxon>eudicotyledons</taxon>
        <taxon>Gunneridae</taxon>
        <taxon>Pentapetalae</taxon>
        <taxon>rosids</taxon>
        <taxon>malvids</taxon>
        <taxon>Brassicales</taxon>
        <taxon>Brassicaceae</taxon>
        <taxon>Camelineae</taxon>
        <taxon>Arabidopsis</taxon>
    </lineage>
</organism>
<dbReference type="EC" id="2.4.1.-"/>
<dbReference type="EMBL" id="AY765462">
    <property type="protein sequence ID" value="AAV32497.1"/>
    <property type="molecule type" value="mRNA"/>
</dbReference>
<dbReference type="EMBL" id="AC068562">
    <property type="protein sequence ID" value="AAF87255.1"/>
    <property type="molecule type" value="Genomic_DNA"/>
</dbReference>
<dbReference type="EMBL" id="CP002684">
    <property type="protein sequence ID" value="AEE30234.1"/>
    <property type="molecule type" value="Genomic_DNA"/>
</dbReference>
<dbReference type="EMBL" id="CP002684">
    <property type="protein sequence ID" value="AEE30235.1"/>
    <property type="molecule type" value="Genomic_DNA"/>
</dbReference>
<dbReference type="EMBL" id="AY039897">
    <property type="protein sequence ID" value="AAK64001.1"/>
    <property type="molecule type" value="mRNA"/>
</dbReference>
<dbReference type="EMBL" id="AY077671">
    <property type="protein sequence ID" value="AAL76149.1"/>
    <property type="molecule type" value="mRNA"/>
</dbReference>
<dbReference type="EMBL" id="AK230378">
    <property type="protein sequence ID" value="BAF02177.1"/>
    <property type="molecule type" value="mRNA"/>
</dbReference>
<dbReference type="PIR" id="F86356">
    <property type="entry name" value="F86356"/>
</dbReference>
<dbReference type="RefSeq" id="NP_564170.1">
    <molecule id="Q9LMF0-2"/>
    <property type="nucleotide sequence ID" value="NM_102087.2"/>
</dbReference>
<dbReference type="RefSeq" id="NP_973885.1">
    <molecule id="Q9LMF0-1"/>
    <property type="nucleotide sequence ID" value="NM_202156.2"/>
</dbReference>
<dbReference type="SMR" id="Q9LMF0"/>
<dbReference type="FunCoup" id="Q9LMF0">
    <property type="interactions" value="289"/>
</dbReference>
<dbReference type="STRING" id="3702.Q9LMF0"/>
<dbReference type="CAZy" id="GT1">
    <property type="family name" value="Glycosyltransferase Family 1"/>
</dbReference>
<dbReference type="iPTMnet" id="Q9LMF0"/>
<dbReference type="PaxDb" id="3702-AT1G22370.2"/>
<dbReference type="ProteomicsDB" id="228713">
    <molecule id="Q9LMF0-1"/>
</dbReference>
<dbReference type="EnsemblPlants" id="AT1G22370.1">
    <molecule id="Q9LMF0-2"/>
    <property type="protein sequence ID" value="AT1G22370.1"/>
    <property type="gene ID" value="AT1G22370"/>
</dbReference>
<dbReference type="EnsemblPlants" id="AT1G22370.2">
    <molecule id="Q9LMF0-1"/>
    <property type="protein sequence ID" value="AT1G22370.2"/>
    <property type="gene ID" value="AT1G22370"/>
</dbReference>
<dbReference type="GeneID" id="838844"/>
<dbReference type="Gramene" id="AT1G22370.1">
    <molecule id="Q9LMF0-2"/>
    <property type="protein sequence ID" value="AT1G22370.1"/>
    <property type="gene ID" value="AT1G22370"/>
</dbReference>
<dbReference type="Gramene" id="AT1G22370.2">
    <molecule id="Q9LMF0-1"/>
    <property type="protein sequence ID" value="AT1G22370.2"/>
    <property type="gene ID" value="AT1G22370"/>
</dbReference>
<dbReference type="KEGG" id="ath:AT1G22370"/>
<dbReference type="Araport" id="AT1G22370"/>
<dbReference type="TAIR" id="AT1G22370">
    <property type="gene designation" value="UGT85A5"/>
</dbReference>
<dbReference type="eggNOG" id="KOG1192">
    <property type="taxonomic scope" value="Eukaryota"/>
</dbReference>
<dbReference type="HOGENOM" id="CLU_001724_0_0_1"/>
<dbReference type="InParanoid" id="Q9LMF0"/>
<dbReference type="OMA" id="ERRMIAT"/>
<dbReference type="PhylomeDB" id="Q9LMF0"/>
<dbReference type="BioCyc" id="ARA:AT1G22370-MONOMER"/>
<dbReference type="PRO" id="PR:Q9LMF0"/>
<dbReference type="Proteomes" id="UP000006548">
    <property type="component" value="Chromosome 1"/>
</dbReference>
<dbReference type="ExpressionAtlas" id="Q9LMF0">
    <property type="expression patterns" value="baseline and differential"/>
</dbReference>
<dbReference type="GO" id="GO:0015020">
    <property type="term" value="F:glucuronosyltransferase activity"/>
    <property type="evidence" value="ECO:0000250"/>
    <property type="project" value="TAIR"/>
</dbReference>
<dbReference type="GO" id="GO:0035251">
    <property type="term" value="F:UDP-glucosyltransferase activity"/>
    <property type="evidence" value="ECO:0007669"/>
    <property type="project" value="UniProtKB-ARBA"/>
</dbReference>
<dbReference type="CDD" id="cd03784">
    <property type="entry name" value="GT1_Gtf-like"/>
    <property type="match status" value="1"/>
</dbReference>
<dbReference type="FunFam" id="3.40.50.2000:FF:000027">
    <property type="entry name" value="Glycosyltransferase"/>
    <property type="match status" value="1"/>
</dbReference>
<dbReference type="FunFam" id="3.40.50.2000:FF:000055">
    <property type="entry name" value="Glycosyltransferase"/>
    <property type="match status" value="1"/>
</dbReference>
<dbReference type="Gene3D" id="3.40.50.2000">
    <property type="entry name" value="Glycogen Phosphorylase B"/>
    <property type="match status" value="2"/>
</dbReference>
<dbReference type="InterPro" id="IPR002213">
    <property type="entry name" value="UDP_glucos_trans"/>
</dbReference>
<dbReference type="InterPro" id="IPR035595">
    <property type="entry name" value="UDP_glycos_trans_CS"/>
</dbReference>
<dbReference type="PANTHER" id="PTHR11926">
    <property type="entry name" value="GLUCOSYL/GLUCURONOSYL TRANSFERASES"/>
    <property type="match status" value="1"/>
</dbReference>
<dbReference type="PANTHER" id="PTHR11926:SF774">
    <property type="entry name" value="UDP-GLYCOSYLTRANSFERASE 85A1-RELATED"/>
    <property type="match status" value="1"/>
</dbReference>
<dbReference type="Pfam" id="PF00201">
    <property type="entry name" value="UDPGT"/>
    <property type="match status" value="1"/>
</dbReference>
<dbReference type="SUPFAM" id="SSF53756">
    <property type="entry name" value="UDP-Glycosyltransferase/glycogen phosphorylase"/>
    <property type="match status" value="1"/>
</dbReference>
<dbReference type="PROSITE" id="PS00375">
    <property type="entry name" value="UDPGT"/>
    <property type="match status" value="1"/>
</dbReference>
<reference key="1">
    <citation type="submission" date="2004-09" db="EMBL/GenBank/DDBJ databases">
        <title>Control of Arabidopsis development by glucuronide metabolism.</title>
        <authorList>
            <person name="Woo H.-H."/>
        </authorList>
    </citation>
    <scope>NUCLEOTIDE SEQUENCE [MRNA] (ISOFORM 1)</scope>
</reference>
<reference key="2">
    <citation type="journal article" date="2000" name="Nature">
        <title>Sequence and analysis of chromosome 1 of the plant Arabidopsis thaliana.</title>
        <authorList>
            <person name="Theologis A."/>
            <person name="Ecker J.R."/>
            <person name="Palm C.J."/>
            <person name="Federspiel N.A."/>
            <person name="Kaul S."/>
            <person name="White O."/>
            <person name="Alonso J."/>
            <person name="Altafi H."/>
            <person name="Araujo R."/>
            <person name="Bowman C.L."/>
            <person name="Brooks S.Y."/>
            <person name="Buehler E."/>
            <person name="Chan A."/>
            <person name="Chao Q."/>
            <person name="Chen H."/>
            <person name="Cheuk R.F."/>
            <person name="Chin C.W."/>
            <person name="Chung M.K."/>
            <person name="Conn L."/>
            <person name="Conway A.B."/>
            <person name="Conway A.R."/>
            <person name="Creasy T.H."/>
            <person name="Dewar K."/>
            <person name="Dunn P."/>
            <person name="Etgu P."/>
            <person name="Feldblyum T.V."/>
            <person name="Feng J.-D."/>
            <person name="Fong B."/>
            <person name="Fujii C.Y."/>
            <person name="Gill J.E."/>
            <person name="Goldsmith A.D."/>
            <person name="Haas B."/>
            <person name="Hansen N.F."/>
            <person name="Hughes B."/>
            <person name="Huizar L."/>
            <person name="Hunter J.L."/>
            <person name="Jenkins J."/>
            <person name="Johnson-Hopson C."/>
            <person name="Khan S."/>
            <person name="Khaykin E."/>
            <person name="Kim C.J."/>
            <person name="Koo H.L."/>
            <person name="Kremenetskaia I."/>
            <person name="Kurtz D.B."/>
            <person name="Kwan A."/>
            <person name="Lam B."/>
            <person name="Langin-Hooper S."/>
            <person name="Lee A."/>
            <person name="Lee J.M."/>
            <person name="Lenz C.A."/>
            <person name="Li J.H."/>
            <person name="Li Y.-P."/>
            <person name="Lin X."/>
            <person name="Liu S.X."/>
            <person name="Liu Z.A."/>
            <person name="Luros J.S."/>
            <person name="Maiti R."/>
            <person name="Marziali A."/>
            <person name="Militscher J."/>
            <person name="Miranda M."/>
            <person name="Nguyen M."/>
            <person name="Nierman W.C."/>
            <person name="Osborne B.I."/>
            <person name="Pai G."/>
            <person name="Peterson J."/>
            <person name="Pham P.K."/>
            <person name="Rizzo M."/>
            <person name="Rooney T."/>
            <person name="Rowley D."/>
            <person name="Sakano H."/>
            <person name="Salzberg S.L."/>
            <person name="Schwartz J.R."/>
            <person name="Shinn P."/>
            <person name="Southwick A.M."/>
            <person name="Sun H."/>
            <person name="Tallon L.J."/>
            <person name="Tambunga G."/>
            <person name="Toriumi M.J."/>
            <person name="Town C.D."/>
            <person name="Utterback T."/>
            <person name="Van Aken S."/>
            <person name="Vaysberg M."/>
            <person name="Vysotskaia V.S."/>
            <person name="Walker M."/>
            <person name="Wu D."/>
            <person name="Yu G."/>
            <person name="Fraser C.M."/>
            <person name="Venter J.C."/>
            <person name="Davis R.W."/>
        </authorList>
    </citation>
    <scope>NUCLEOTIDE SEQUENCE [LARGE SCALE GENOMIC DNA]</scope>
    <source>
        <strain>cv. Columbia</strain>
    </source>
</reference>
<reference key="3">
    <citation type="journal article" date="2017" name="Plant J.">
        <title>Araport11: a complete reannotation of the Arabidopsis thaliana reference genome.</title>
        <authorList>
            <person name="Cheng C.Y."/>
            <person name="Krishnakumar V."/>
            <person name="Chan A.P."/>
            <person name="Thibaud-Nissen F."/>
            <person name="Schobel S."/>
            <person name="Town C.D."/>
        </authorList>
    </citation>
    <scope>GENOME REANNOTATION</scope>
    <source>
        <strain>cv. Columbia</strain>
    </source>
</reference>
<reference key="4">
    <citation type="journal article" date="2003" name="Science">
        <title>Empirical analysis of transcriptional activity in the Arabidopsis genome.</title>
        <authorList>
            <person name="Yamada K."/>
            <person name="Lim J."/>
            <person name="Dale J.M."/>
            <person name="Chen H."/>
            <person name="Shinn P."/>
            <person name="Palm C.J."/>
            <person name="Southwick A.M."/>
            <person name="Wu H.C."/>
            <person name="Kim C.J."/>
            <person name="Nguyen M."/>
            <person name="Pham P.K."/>
            <person name="Cheuk R.F."/>
            <person name="Karlin-Newmann G."/>
            <person name="Liu S.X."/>
            <person name="Lam B."/>
            <person name="Sakano H."/>
            <person name="Wu T."/>
            <person name="Yu G."/>
            <person name="Miranda M."/>
            <person name="Quach H.L."/>
            <person name="Tripp M."/>
            <person name="Chang C.H."/>
            <person name="Lee J.M."/>
            <person name="Toriumi M.J."/>
            <person name="Chan M.M."/>
            <person name="Tang C.C."/>
            <person name="Onodera C.S."/>
            <person name="Deng J.M."/>
            <person name="Akiyama K."/>
            <person name="Ansari Y."/>
            <person name="Arakawa T."/>
            <person name="Banh J."/>
            <person name="Banno F."/>
            <person name="Bowser L."/>
            <person name="Brooks S.Y."/>
            <person name="Carninci P."/>
            <person name="Chao Q."/>
            <person name="Choy N."/>
            <person name="Enju A."/>
            <person name="Goldsmith A.D."/>
            <person name="Gurjal M."/>
            <person name="Hansen N.F."/>
            <person name="Hayashizaki Y."/>
            <person name="Johnson-Hopson C."/>
            <person name="Hsuan V.W."/>
            <person name="Iida K."/>
            <person name="Karnes M."/>
            <person name="Khan S."/>
            <person name="Koesema E."/>
            <person name="Ishida J."/>
            <person name="Jiang P.X."/>
            <person name="Jones T."/>
            <person name="Kawai J."/>
            <person name="Kamiya A."/>
            <person name="Meyers C."/>
            <person name="Nakajima M."/>
            <person name="Narusaka M."/>
            <person name="Seki M."/>
            <person name="Sakurai T."/>
            <person name="Satou M."/>
            <person name="Tamse R."/>
            <person name="Vaysberg M."/>
            <person name="Wallender E.K."/>
            <person name="Wong C."/>
            <person name="Yamamura Y."/>
            <person name="Yuan S."/>
            <person name="Shinozaki K."/>
            <person name="Davis R.W."/>
            <person name="Theologis A."/>
            <person name="Ecker J.R."/>
        </authorList>
    </citation>
    <scope>NUCLEOTIDE SEQUENCE [LARGE SCALE MRNA] (ISOFORM 2)</scope>
    <source>
        <strain>cv. Columbia</strain>
    </source>
</reference>
<reference key="5">
    <citation type="submission" date="2006-07" db="EMBL/GenBank/DDBJ databases">
        <title>Large-scale analysis of RIKEN Arabidopsis full-length (RAFL) cDNAs.</title>
        <authorList>
            <person name="Totoki Y."/>
            <person name="Seki M."/>
            <person name="Ishida J."/>
            <person name="Nakajima M."/>
            <person name="Enju A."/>
            <person name="Kamiya A."/>
            <person name="Narusaka M."/>
            <person name="Shin-i T."/>
            <person name="Nakagawa M."/>
            <person name="Sakamoto N."/>
            <person name="Oishi K."/>
            <person name="Kohara Y."/>
            <person name="Kobayashi M."/>
            <person name="Toyoda A."/>
            <person name="Sakaki Y."/>
            <person name="Sakurai T."/>
            <person name="Iida K."/>
            <person name="Akiyama K."/>
            <person name="Satou M."/>
            <person name="Toyoda T."/>
            <person name="Konagaya A."/>
            <person name="Carninci P."/>
            <person name="Kawai J."/>
            <person name="Hayashizaki Y."/>
            <person name="Shinozaki K."/>
        </authorList>
    </citation>
    <scope>NUCLEOTIDE SEQUENCE [LARGE SCALE MRNA] OF 270-479</scope>
    <source>
        <strain>cv. Columbia</strain>
    </source>
</reference>
<reference key="6">
    <citation type="journal article" date="2001" name="J. Biol. Chem.">
        <title>Phylogenetic analysis of the UDP-glycosyltransferase multigene family of Arabidopsis thaliana.</title>
        <authorList>
            <person name="Li Y."/>
            <person name="Baldauf S."/>
            <person name="Lim E.K."/>
            <person name="Bowles D.J."/>
        </authorList>
    </citation>
    <scope>GENE FAMILY</scope>
</reference>
<reference key="7">
    <citation type="journal article" date="2007" name="Genomics">
        <title>Characterization of Arabidopsis AtUGT85A and AtGUS gene families and their expression in rapidly dividing tissues.</title>
        <authorList>
            <person name="Woo H.H."/>
            <person name="Jeong B.R."/>
            <person name="Hirsch A.M."/>
            <person name="Hawes M.C."/>
        </authorList>
    </citation>
    <scope>TISSUE SPECIFICITY</scope>
</reference>
<feature type="chain" id="PRO_0000409129" description="UDP-glycosyltransferase 85A5">
    <location>
        <begin position="1"/>
        <end position="479"/>
    </location>
</feature>
<feature type="binding site" evidence="1">
    <location>
        <position position="301"/>
    </location>
    <ligand>
        <name>UDP-alpha-D-glucose</name>
        <dbReference type="ChEBI" id="CHEBI:58885"/>
    </ligand>
</feature>
<feature type="binding site" evidence="1">
    <location>
        <begin position="358"/>
        <end position="360"/>
    </location>
    <ligand>
        <name>UDP-alpha-D-glucose</name>
        <dbReference type="ChEBI" id="CHEBI:58885"/>
    </ligand>
</feature>
<feature type="binding site" evidence="1">
    <location>
        <begin position="375"/>
        <end position="383"/>
    </location>
    <ligand>
        <name>UDP-alpha-D-glucose</name>
        <dbReference type="ChEBI" id="CHEBI:58885"/>
    </ligand>
</feature>
<feature type="binding site" evidence="1">
    <location>
        <begin position="397"/>
        <end position="400"/>
    </location>
    <ligand>
        <name>UDP-alpha-D-glucose</name>
        <dbReference type="ChEBI" id="CHEBI:58885"/>
    </ligand>
</feature>
<feature type="splice variant" id="VSP_041231" description="In isoform 2." evidence="3">
    <original>MASHAVTSGQKPHVVCIPFPAQGHINPMLKVAKLLYARGFHVTFVNTNYNHNRLIRSRGPNSLDGLPSFRFESIPDGLPEENKDVMQDVPTLCESTMKNCLAPFKELLRRINTTKDVPPVSCIVSDGVMSFTLDAAEELGVPDVLFWTPSACGFLAYLHFYRFIEKGLSPIK</original>
    <variation>MA</variation>
    <location>
        <begin position="1"/>
        <end position="172"/>
    </location>
</feature>
<feature type="sequence conflict" description="In Ref. 1; AAV32497." evidence="4" ref="1">
    <original>K</original>
    <variation>KGIMA</variation>
    <location>
        <position position="172"/>
    </location>
</feature>
<feature type="sequence conflict" description="In Ref. 5; BAF02177." evidence="4" ref="5">
    <original>E</original>
    <variation>G</variation>
    <location>
        <position position="448"/>
    </location>
</feature>
<name>U85A5_ARATH</name>
<sequence>MASHAVTSGQKPHVVCIPFPAQGHINPMLKVAKLLYARGFHVTFVNTNYNHNRLIRSRGPNSLDGLPSFRFESIPDGLPEENKDVMQDVPTLCESTMKNCLAPFKELLRRINTTKDVPPVSCIVSDGVMSFTLDAAEELGVPDVLFWTPSACGFLAYLHFYRFIEKGLSPIKDESSLDTKINWIPSMKNLGLKDIPSFIRATNTEDIMLNFFVHEADRAKRASAIILNTFDSLEHDVVRSIQSIIPQVYTIGPLHLFVNRDIDEESDIGQIGTNMWREEMECLDWLDTKSPNSVVYVNFGSITVMSAKQLVEFAWGLAATKKDFLWVIRPDLVAGDVPMLPPDFLIETANRRMLASWCPQEKVLSHPAVGGFLTHSGWNSTLESLSGGVPMVCWPFFAEQQTNCKYCCDEWEVGMEIGGDVRREEVEELVRELMDGDKGKKMRQKAEEWQRLAEEATKPIYGSSELNFQMVVDKVLLGE</sequence>
<evidence type="ECO:0000250" key="1"/>
<evidence type="ECO:0000269" key="2">
    <source>
    </source>
</evidence>
<evidence type="ECO:0000303" key="3">
    <source>
    </source>
</evidence>
<evidence type="ECO:0000305" key="4"/>
<gene>
    <name type="primary">UGT85A5</name>
    <name type="synonym">UGT3</name>
    <name type="ordered locus">At1g22370</name>
    <name type="ORF">T16E15.2</name>
</gene>
<comment type="alternative products">
    <event type="alternative splicing"/>
    <isoform>
        <id>Q9LMF0-1</id>
        <name>1</name>
        <sequence type="displayed"/>
    </isoform>
    <isoform>
        <id>Q9LMF0-2</id>
        <name>2</name>
        <sequence type="described" ref="VSP_041231"/>
    </isoform>
</comment>
<comment type="tissue specificity">
    <text evidence="2">Expressed in roots, shoots and leaves.</text>
</comment>
<comment type="similarity">
    <text evidence="4">Belongs to the UDP-glycosyltransferase family.</text>
</comment>